<name>YMP6_CAEEL</name>
<gene>
    <name evidence="3" type="primary">spot-1</name>
    <name evidence="3" type="ORF">B0361.6</name>
</gene>
<accession>Q10950</accession>
<feature type="chain" id="PRO_0000065077" description="Putative methyltransferase spot-1">
    <location>
        <begin position="1"/>
        <end position="378"/>
    </location>
</feature>
<dbReference type="EC" id="2.1.1.-" evidence="2"/>
<dbReference type="EMBL" id="FO080185">
    <property type="protein sequence ID" value="CCD61821.1"/>
    <property type="molecule type" value="Genomic_DNA"/>
</dbReference>
<dbReference type="PIR" id="B88504">
    <property type="entry name" value="B88504"/>
</dbReference>
<dbReference type="RefSeq" id="NP_498602.1">
    <property type="nucleotide sequence ID" value="NM_066201.5"/>
</dbReference>
<dbReference type="SMR" id="Q10950"/>
<dbReference type="BioGRID" id="41239">
    <property type="interactions" value="2"/>
</dbReference>
<dbReference type="FunCoup" id="Q10950">
    <property type="interactions" value="2671"/>
</dbReference>
<dbReference type="STRING" id="6239.B0361.6.1"/>
<dbReference type="PaxDb" id="6239-B0361.6"/>
<dbReference type="PeptideAtlas" id="Q10950"/>
<dbReference type="EnsemblMetazoa" id="B0361.6.1">
    <property type="protein sequence ID" value="B0361.6.1"/>
    <property type="gene ID" value="WBGene00015160"/>
</dbReference>
<dbReference type="GeneID" id="176028"/>
<dbReference type="KEGG" id="cel:CELE_B0361.6"/>
<dbReference type="UCSC" id="B0361.6">
    <property type="organism name" value="c. elegans"/>
</dbReference>
<dbReference type="AGR" id="WB:WBGene00015160"/>
<dbReference type="CTD" id="176028"/>
<dbReference type="WormBase" id="B0361.6">
    <property type="protein sequence ID" value="CE00835"/>
    <property type="gene ID" value="WBGene00015160"/>
    <property type="gene designation" value="spot-1"/>
</dbReference>
<dbReference type="eggNOG" id="KOG3925">
    <property type="taxonomic scope" value="Eukaryota"/>
</dbReference>
<dbReference type="GeneTree" id="ENSGT00390000016537"/>
<dbReference type="HOGENOM" id="CLU_017233_4_0_1"/>
<dbReference type="InParanoid" id="Q10950"/>
<dbReference type="OMA" id="FFPIHKD"/>
<dbReference type="OrthoDB" id="361029at2759"/>
<dbReference type="PhylomeDB" id="Q10950"/>
<dbReference type="PRO" id="PR:Q10950"/>
<dbReference type="Proteomes" id="UP000001940">
    <property type="component" value="Chromosome III"/>
</dbReference>
<dbReference type="Bgee" id="WBGene00015160">
    <property type="expression patterns" value="Expressed in germ line (C elegans) and 4 other cell types or tissues"/>
</dbReference>
<dbReference type="GO" id="GO:0005813">
    <property type="term" value="C:centrosome"/>
    <property type="evidence" value="ECO:0007669"/>
    <property type="project" value="UniProtKB-SubCell"/>
</dbReference>
<dbReference type="GO" id="GO:0005737">
    <property type="term" value="C:cytoplasm"/>
    <property type="evidence" value="ECO:0007669"/>
    <property type="project" value="UniProtKB-KW"/>
</dbReference>
<dbReference type="GO" id="GO:0000776">
    <property type="term" value="C:kinetochore"/>
    <property type="evidence" value="ECO:0007669"/>
    <property type="project" value="UniProtKB-KW"/>
</dbReference>
<dbReference type="GO" id="GO:0005819">
    <property type="term" value="C:spindle"/>
    <property type="evidence" value="ECO:0007669"/>
    <property type="project" value="UniProtKB-SubCell"/>
</dbReference>
<dbReference type="GO" id="GO:0008168">
    <property type="term" value="F:methyltransferase activity"/>
    <property type="evidence" value="ECO:0007669"/>
    <property type="project" value="UniProtKB-KW"/>
</dbReference>
<dbReference type="GO" id="GO:0032259">
    <property type="term" value="P:methylation"/>
    <property type="evidence" value="ECO:0007669"/>
    <property type="project" value="UniProtKB-KW"/>
</dbReference>
<dbReference type="CDD" id="cd18086">
    <property type="entry name" value="HsC9orf114-like"/>
    <property type="match status" value="1"/>
</dbReference>
<dbReference type="Gene3D" id="3.40.1280.10">
    <property type="match status" value="1"/>
</dbReference>
<dbReference type="Gene3D" id="2.40.50.140">
    <property type="entry name" value="Nucleic acid-binding proteins"/>
    <property type="match status" value="1"/>
</dbReference>
<dbReference type="InterPro" id="IPR029028">
    <property type="entry name" value="Alpha/beta_knot_MTases"/>
</dbReference>
<dbReference type="InterPro" id="IPR012340">
    <property type="entry name" value="NA-bd_OB-fold"/>
</dbReference>
<dbReference type="InterPro" id="IPR003750">
    <property type="entry name" value="Put_MeTrfase-C9orf114-like"/>
</dbReference>
<dbReference type="InterPro" id="IPR029026">
    <property type="entry name" value="tRNA_m1G_MTases_N"/>
</dbReference>
<dbReference type="PANTHER" id="PTHR12150">
    <property type="entry name" value="CLASS IV SAM-BINDING METHYLTRANSFERASE-RELATED"/>
    <property type="match status" value="1"/>
</dbReference>
<dbReference type="PANTHER" id="PTHR12150:SF13">
    <property type="entry name" value="METHYLTRANSFERASE C9ORF114-RELATED"/>
    <property type="match status" value="1"/>
</dbReference>
<dbReference type="Pfam" id="PF02598">
    <property type="entry name" value="Methyltrn_RNA_3"/>
    <property type="match status" value="1"/>
</dbReference>
<dbReference type="SUPFAM" id="SSF75217">
    <property type="entry name" value="alpha/beta knot"/>
    <property type="match status" value="1"/>
</dbReference>
<dbReference type="SUPFAM" id="SSF50249">
    <property type="entry name" value="Nucleic acid-binding proteins"/>
    <property type="match status" value="1"/>
</dbReference>
<proteinExistence type="inferred from homology"/>
<keyword id="KW-0137">Centromere</keyword>
<keyword id="KW-0158">Chromosome</keyword>
<keyword id="KW-0963">Cytoplasm</keyword>
<keyword id="KW-0206">Cytoskeleton</keyword>
<keyword id="KW-0995">Kinetochore</keyword>
<keyword id="KW-0489">Methyltransferase</keyword>
<keyword id="KW-1185">Reference proteome</keyword>
<keyword id="KW-0808">Transferase</keyword>
<sequence>MHPDQKKTFKEKNDIRKKLFNSTKEERLDWRKMKDEKKRKNEEKIIKEAEEAKKAKIEKVDHTPPFTISIAVPGQFLNNAQSAELRTYMAGQIARAATLYRVDEIIIYDESCRMTDEAVNAYYNGTWQGNLIPAETNYEGCFYLAKILEYLECPQYLRKDLFPIQKPLKNAGLLNPLDAQHHLKYDEKTLRFREGVVLKKRSKDGRGPICNIGLEKEFEIDSDAVQLPPYTRVTVEIKNLTEQCKLYRGSITSGATVTRETGLYWGYSVRLMTGLQKVLQAKKFDIVAGVSPRGKLASQMDVCILNKPKILLVFGGVAGVDAAVESEELAEWRRAEDAFDVLIRTTSLSNGSRSERVEENVLSVLAQVQCHLETLNAL</sequence>
<organism>
    <name type="scientific">Caenorhabditis elegans</name>
    <dbReference type="NCBI Taxonomy" id="6239"/>
    <lineage>
        <taxon>Eukaryota</taxon>
        <taxon>Metazoa</taxon>
        <taxon>Ecdysozoa</taxon>
        <taxon>Nematoda</taxon>
        <taxon>Chromadorea</taxon>
        <taxon>Rhabditida</taxon>
        <taxon>Rhabditina</taxon>
        <taxon>Rhabditomorpha</taxon>
        <taxon>Rhabditoidea</taxon>
        <taxon>Rhabditidae</taxon>
        <taxon>Peloderinae</taxon>
        <taxon>Caenorhabditis</taxon>
    </lineage>
</organism>
<protein>
    <recommendedName>
        <fullName evidence="2">Putative methyltransferase spot-1</fullName>
        <ecNumber evidence="2">2.1.1.-</ecNumber>
    </recommendedName>
</protein>
<evidence type="ECO:0000250" key="1">
    <source>
        <dbReference type="UniProtKB" id="Q5T280"/>
    </source>
</evidence>
<evidence type="ECO:0000305" key="2"/>
<evidence type="ECO:0000312" key="3">
    <source>
        <dbReference type="WormBase" id="B0361.6"/>
    </source>
</evidence>
<reference key="1">
    <citation type="journal article" date="1998" name="Science">
        <title>Genome sequence of the nematode C. elegans: a platform for investigating biology.</title>
        <authorList>
            <consortium name="The C. elegans sequencing consortium"/>
        </authorList>
    </citation>
    <scope>NUCLEOTIDE SEQUENCE [LARGE SCALE GENOMIC DNA]</scope>
    <source>
        <strain>Bristol N2</strain>
    </source>
</reference>
<comment type="function">
    <text evidence="1">Required for association of the centrosomes with the poles of the bipolar mitotic spindle during metaphase.</text>
</comment>
<comment type="subcellular location">
    <subcellularLocation>
        <location evidence="1">Cytoplasm</location>
        <location evidence="1">Cytoskeleton</location>
        <location evidence="1">Spindle</location>
    </subcellularLocation>
    <subcellularLocation>
        <location evidence="1">Chromosome</location>
        <location evidence="1">Centromere</location>
        <location evidence="1">Kinetochore</location>
    </subcellularLocation>
    <subcellularLocation>
        <location evidence="1">Cytoplasm</location>
        <location evidence="1">Cytoskeleton</location>
        <location evidence="1">Microtubule organizing center</location>
        <location evidence="1">Centrosome</location>
    </subcellularLocation>
</comment>
<comment type="similarity">
    <text evidence="2">Belongs to the class IV-like SAM-binding methyltransferase superfamily.</text>
</comment>